<dbReference type="EMBL" id="AY943909">
    <property type="protein sequence ID" value="AAY24522.1"/>
    <property type="molecule type" value="mRNA"/>
</dbReference>
<dbReference type="EMBL" id="AK007451">
    <property type="protein sequence ID" value="BAB25046.1"/>
    <property type="molecule type" value="mRNA"/>
</dbReference>
<dbReference type="EMBL" id="AK007705">
    <property type="protein sequence ID" value="BAB25201.1"/>
    <property type="molecule type" value="mRNA"/>
</dbReference>
<dbReference type="EMBL" id="AK008986">
    <property type="protein sequence ID" value="BAB26008.1"/>
    <property type="molecule type" value="mRNA"/>
</dbReference>
<dbReference type="EMBL" id="BC099445">
    <property type="protein sequence ID" value="AAH99445.1"/>
    <property type="molecule type" value="mRNA"/>
</dbReference>
<dbReference type="CCDS" id="CCDS39546.1"/>
<dbReference type="RefSeq" id="NP_079743.1">
    <property type="nucleotide sequence ID" value="NM_025467.1"/>
</dbReference>
<dbReference type="SMR" id="Q9CQS6"/>
<dbReference type="FunCoup" id="Q9CQS6">
    <property type="interactions" value="76"/>
</dbReference>
<dbReference type="STRING" id="10090.ENSMUSP00000032128"/>
<dbReference type="PhosphoSitePlus" id="Q9CQS6"/>
<dbReference type="PaxDb" id="10090-ENSMUSP00000032128"/>
<dbReference type="ProteomicsDB" id="265751"/>
<dbReference type="Antibodypedia" id="56589">
    <property type="antibodies" value="103 antibodies from 21 providers"/>
</dbReference>
<dbReference type="DNASU" id="66284"/>
<dbReference type="Ensembl" id="ENSMUST00000032128.6">
    <property type="protein sequence ID" value="ENSMUSP00000032128.5"/>
    <property type="gene ID" value="ENSMUSG00000030049.6"/>
</dbReference>
<dbReference type="GeneID" id="66284"/>
<dbReference type="KEGG" id="mmu:66284"/>
<dbReference type="UCSC" id="uc009cti.1">
    <property type="organism name" value="mouse"/>
</dbReference>
<dbReference type="AGR" id="MGI:1913534"/>
<dbReference type="CTD" id="200504"/>
<dbReference type="MGI" id="MGI:1913534">
    <property type="gene designation" value="Gkn2"/>
</dbReference>
<dbReference type="VEuPathDB" id="HostDB:ENSMUSG00000030049"/>
<dbReference type="eggNOG" id="ENOG502SNS6">
    <property type="taxonomic scope" value="Eukaryota"/>
</dbReference>
<dbReference type="GeneTree" id="ENSGT00930000150969"/>
<dbReference type="HOGENOM" id="CLU_098684_2_0_1"/>
<dbReference type="InParanoid" id="Q9CQS6"/>
<dbReference type="OMA" id="YILKMNH"/>
<dbReference type="OrthoDB" id="5977941at2759"/>
<dbReference type="PhylomeDB" id="Q9CQS6"/>
<dbReference type="TreeFam" id="TF335950"/>
<dbReference type="BioGRID-ORCS" id="66284">
    <property type="hits" value="1 hit in 77 CRISPR screens"/>
</dbReference>
<dbReference type="ChiTaRS" id="Gkn2">
    <property type="organism name" value="mouse"/>
</dbReference>
<dbReference type="PRO" id="PR:Q9CQS6"/>
<dbReference type="Proteomes" id="UP000000589">
    <property type="component" value="Chromosome 6"/>
</dbReference>
<dbReference type="RNAct" id="Q9CQS6">
    <property type="molecule type" value="protein"/>
</dbReference>
<dbReference type="Bgee" id="ENSMUSG00000030049">
    <property type="expression patterns" value="Expressed in epithelium of stomach and 33 other cell types or tissues"/>
</dbReference>
<dbReference type="GO" id="GO:0045178">
    <property type="term" value="C:basal part of cell"/>
    <property type="evidence" value="ECO:0000314"/>
    <property type="project" value="MGI"/>
</dbReference>
<dbReference type="GO" id="GO:0005576">
    <property type="term" value="C:extracellular region"/>
    <property type="evidence" value="ECO:0007669"/>
    <property type="project" value="UniProtKB-SubCell"/>
</dbReference>
<dbReference type="GO" id="GO:0005794">
    <property type="term" value="C:Golgi apparatus"/>
    <property type="evidence" value="ECO:0007669"/>
    <property type="project" value="UniProtKB-SubCell"/>
</dbReference>
<dbReference type="GO" id="GO:0010467">
    <property type="term" value="P:gene expression"/>
    <property type="evidence" value="ECO:0000315"/>
    <property type="project" value="MGI"/>
</dbReference>
<dbReference type="GO" id="GO:0006954">
    <property type="term" value="P:inflammatory response"/>
    <property type="evidence" value="ECO:0000315"/>
    <property type="project" value="MGI"/>
</dbReference>
<dbReference type="GO" id="GO:0002283">
    <property type="term" value="P:neutrophil activation involved in immune response"/>
    <property type="evidence" value="ECO:0000315"/>
    <property type="project" value="MGI"/>
</dbReference>
<dbReference type="GO" id="GO:0044546">
    <property type="term" value="P:NLRP3 inflammasome complex assembly"/>
    <property type="evidence" value="ECO:0000315"/>
    <property type="project" value="MGI"/>
</dbReference>
<dbReference type="GO" id="GO:0009617">
    <property type="term" value="P:response to bacterium"/>
    <property type="evidence" value="ECO:0000270"/>
    <property type="project" value="MGI"/>
</dbReference>
<dbReference type="GO" id="GO:0051414">
    <property type="term" value="P:response to cortisol"/>
    <property type="evidence" value="ECO:0000314"/>
    <property type="project" value="MGI"/>
</dbReference>
<dbReference type="GO" id="GO:0006950">
    <property type="term" value="P:response to stress"/>
    <property type="evidence" value="ECO:0000314"/>
    <property type="project" value="MGI"/>
</dbReference>
<dbReference type="GO" id="GO:0009611">
    <property type="term" value="P:response to wounding"/>
    <property type="evidence" value="ECO:0000314"/>
    <property type="project" value="MGI"/>
</dbReference>
<dbReference type="FunFam" id="3.30.390.150:FF:000004">
    <property type="entry name" value="Gastrokine 2"/>
    <property type="match status" value="1"/>
</dbReference>
<dbReference type="Gene3D" id="3.30.390.150">
    <property type="match status" value="1"/>
</dbReference>
<dbReference type="InterPro" id="IPR007084">
    <property type="entry name" value="BRICHOS_dom"/>
</dbReference>
<dbReference type="InterPro" id="IPR051772">
    <property type="entry name" value="Gastrokine"/>
</dbReference>
<dbReference type="PANTHER" id="PTHR16483">
    <property type="entry name" value="GASTROKINE 1"/>
    <property type="match status" value="1"/>
</dbReference>
<dbReference type="Pfam" id="PF04089">
    <property type="entry name" value="BRICHOS"/>
    <property type="match status" value="1"/>
</dbReference>
<dbReference type="SMART" id="SM01039">
    <property type="entry name" value="BRICHOS"/>
    <property type="match status" value="1"/>
</dbReference>
<dbReference type="PROSITE" id="PS50869">
    <property type="entry name" value="BRICHOS"/>
    <property type="match status" value="1"/>
</dbReference>
<proteinExistence type="evidence at protein level"/>
<reference key="1">
    <citation type="journal article" date="2006" name="Proteomics">
        <title>Identification of blottin: a novel gastric trefoil factor family-2 binding protein.</title>
        <authorList>
            <person name="Otto W.R."/>
            <person name="Patel K."/>
            <person name="McKinnell I."/>
            <person name="Evans M.D."/>
            <person name="Lee C.-Y."/>
            <person name="Frith D."/>
            <person name="Hanrahan S."/>
            <person name="Blight K."/>
            <person name="Blin N."/>
            <person name="Kayademir T."/>
            <person name="Poulsom R."/>
            <person name="Jeffery R."/>
            <person name="Hunt T."/>
            <person name="Wright N.A."/>
            <person name="McGregor F."/>
            <person name="Oien K.A."/>
        </authorList>
    </citation>
    <scope>NUCLEOTIDE SEQUENCE [MRNA]</scope>
    <scope>PARTIAL PROTEIN SEQUENCE</scope>
    <scope>INTERACTION WITH TFF2</scope>
    <scope>SUBCELLULAR LOCATION</scope>
    <scope>TISSUE SPECIFICITY</scope>
    <scope>DEVELOPMENTAL STAGE</scope>
    <source>
        <strain>C57BL/6J</strain>
        <strain>FVB/NJ</strain>
        <tissue>Foveolar epithelium</tissue>
    </source>
</reference>
<reference evidence="6" key="2">
    <citation type="journal article" date="2005" name="Science">
        <title>The transcriptional landscape of the mammalian genome.</title>
        <authorList>
            <person name="Carninci P."/>
            <person name="Kasukawa T."/>
            <person name="Katayama S."/>
            <person name="Gough J."/>
            <person name="Frith M.C."/>
            <person name="Maeda N."/>
            <person name="Oyama R."/>
            <person name="Ravasi T."/>
            <person name="Lenhard B."/>
            <person name="Wells C."/>
            <person name="Kodzius R."/>
            <person name="Shimokawa K."/>
            <person name="Bajic V.B."/>
            <person name="Brenner S.E."/>
            <person name="Batalov S."/>
            <person name="Forrest A.R."/>
            <person name="Zavolan M."/>
            <person name="Davis M.J."/>
            <person name="Wilming L.G."/>
            <person name="Aidinis V."/>
            <person name="Allen J.E."/>
            <person name="Ambesi-Impiombato A."/>
            <person name="Apweiler R."/>
            <person name="Aturaliya R.N."/>
            <person name="Bailey T.L."/>
            <person name="Bansal M."/>
            <person name="Baxter L."/>
            <person name="Beisel K.W."/>
            <person name="Bersano T."/>
            <person name="Bono H."/>
            <person name="Chalk A.M."/>
            <person name="Chiu K.P."/>
            <person name="Choudhary V."/>
            <person name="Christoffels A."/>
            <person name="Clutterbuck D.R."/>
            <person name="Crowe M.L."/>
            <person name="Dalla E."/>
            <person name="Dalrymple B.P."/>
            <person name="de Bono B."/>
            <person name="Della Gatta G."/>
            <person name="di Bernardo D."/>
            <person name="Down T."/>
            <person name="Engstrom P."/>
            <person name="Fagiolini M."/>
            <person name="Faulkner G."/>
            <person name="Fletcher C.F."/>
            <person name="Fukushima T."/>
            <person name="Furuno M."/>
            <person name="Futaki S."/>
            <person name="Gariboldi M."/>
            <person name="Georgii-Hemming P."/>
            <person name="Gingeras T.R."/>
            <person name="Gojobori T."/>
            <person name="Green R.E."/>
            <person name="Gustincich S."/>
            <person name="Harbers M."/>
            <person name="Hayashi Y."/>
            <person name="Hensch T.K."/>
            <person name="Hirokawa N."/>
            <person name="Hill D."/>
            <person name="Huminiecki L."/>
            <person name="Iacono M."/>
            <person name="Ikeo K."/>
            <person name="Iwama A."/>
            <person name="Ishikawa T."/>
            <person name="Jakt M."/>
            <person name="Kanapin A."/>
            <person name="Katoh M."/>
            <person name="Kawasawa Y."/>
            <person name="Kelso J."/>
            <person name="Kitamura H."/>
            <person name="Kitano H."/>
            <person name="Kollias G."/>
            <person name="Krishnan S.P."/>
            <person name="Kruger A."/>
            <person name="Kummerfeld S.K."/>
            <person name="Kurochkin I.V."/>
            <person name="Lareau L.F."/>
            <person name="Lazarevic D."/>
            <person name="Lipovich L."/>
            <person name="Liu J."/>
            <person name="Liuni S."/>
            <person name="McWilliam S."/>
            <person name="Madan Babu M."/>
            <person name="Madera M."/>
            <person name="Marchionni L."/>
            <person name="Matsuda H."/>
            <person name="Matsuzawa S."/>
            <person name="Miki H."/>
            <person name="Mignone F."/>
            <person name="Miyake S."/>
            <person name="Morris K."/>
            <person name="Mottagui-Tabar S."/>
            <person name="Mulder N."/>
            <person name="Nakano N."/>
            <person name="Nakauchi H."/>
            <person name="Ng P."/>
            <person name="Nilsson R."/>
            <person name="Nishiguchi S."/>
            <person name="Nishikawa S."/>
            <person name="Nori F."/>
            <person name="Ohara O."/>
            <person name="Okazaki Y."/>
            <person name="Orlando V."/>
            <person name="Pang K.C."/>
            <person name="Pavan W.J."/>
            <person name="Pavesi G."/>
            <person name="Pesole G."/>
            <person name="Petrovsky N."/>
            <person name="Piazza S."/>
            <person name="Reed J."/>
            <person name="Reid J.F."/>
            <person name="Ring B.Z."/>
            <person name="Ringwald M."/>
            <person name="Rost B."/>
            <person name="Ruan Y."/>
            <person name="Salzberg S.L."/>
            <person name="Sandelin A."/>
            <person name="Schneider C."/>
            <person name="Schoenbach C."/>
            <person name="Sekiguchi K."/>
            <person name="Semple C.A."/>
            <person name="Seno S."/>
            <person name="Sessa L."/>
            <person name="Sheng Y."/>
            <person name="Shibata Y."/>
            <person name="Shimada H."/>
            <person name="Shimada K."/>
            <person name="Silva D."/>
            <person name="Sinclair B."/>
            <person name="Sperling S."/>
            <person name="Stupka E."/>
            <person name="Sugiura K."/>
            <person name="Sultana R."/>
            <person name="Takenaka Y."/>
            <person name="Taki K."/>
            <person name="Tammoja K."/>
            <person name="Tan S.L."/>
            <person name="Tang S."/>
            <person name="Taylor M.S."/>
            <person name="Tegner J."/>
            <person name="Teichmann S.A."/>
            <person name="Ueda H.R."/>
            <person name="van Nimwegen E."/>
            <person name="Verardo R."/>
            <person name="Wei C.L."/>
            <person name="Yagi K."/>
            <person name="Yamanishi H."/>
            <person name="Zabarovsky E."/>
            <person name="Zhu S."/>
            <person name="Zimmer A."/>
            <person name="Hide W."/>
            <person name="Bult C."/>
            <person name="Grimmond S.M."/>
            <person name="Teasdale R.D."/>
            <person name="Liu E.T."/>
            <person name="Brusic V."/>
            <person name="Quackenbush J."/>
            <person name="Wahlestedt C."/>
            <person name="Mattick J.S."/>
            <person name="Hume D.A."/>
            <person name="Kai C."/>
            <person name="Sasaki D."/>
            <person name="Tomaru Y."/>
            <person name="Fukuda S."/>
            <person name="Kanamori-Katayama M."/>
            <person name="Suzuki M."/>
            <person name="Aoki J."/>
            <person name="Arakawa T."/>
            <person name="Iida J."/>
            <person name="Imamura K."/>
            <person name="Itoh M."/>
            <person name="Kato T."/>
            <person name="Kawaji H."/>
            <person name="Kawagashira N."/>
            <person name="Kawashima T."/>
            <person name="Kojima M."/>
            <person name="Kondo S."/>
            <person name="Konno H."/>
            <person name="Nakano K."/>
            <person name="Ninomiya N."/>
            <person name="Nishio T."/>
            <person name="Okada M."/>
            <person name="Plessy C."/>
            <person name="Shibata K."/>
            <person name="Shiraki T."/>
            <person name="Suzuki S."/>
            <person name="Tagami M."/>
            <person name="Waki K."/>
            <person name="Watahiki A."/>
            <person name="Okamura-Oho Y."/>
            <person name="Suzuki H."/>
            <person name="Kawai J."/>
            <person name="Hayashizaki Y."/>
        </authorList>
    </citation>
    <scope>NUCLEOTIDE SEQUENCE [LARGE SCALE MRNA]</scope>
    <source>
        <strain evidence="6">C57BL/6J</strain>
        <tissue evidence="6">Pancreas</tissue>
        <tissue evidence="7">Stomach</tissue>
    </source>
</reference>
<reference evidence="5" key="3">
    <citation type="journal article" date="2004" name="Genome Res.">
        <title>The status, quality, and expansion of the NIH full-length cDNA project: the Mammalian Gene Collection (MGC).</title>
        <authorList>
            <consortium name="The MGC Project Team"/>
        </authorList>
    </citation>
    <scope>NUCLEOTIDE SEQUENCE [LARGE SCALE MRNA]</scope>
    <source>
        <strain evidence="5">C57BL/6J</strain>
        <tissue evidence="5">Placenta</tissue>
    </source>
</reference>
<organism>
    <name type="scientific">Mus musculus</name>
    <name type="common">Mouse</name>
    <dbReference type="NCBI Taxonomy" id="10090"/>
    <lineage>
        <taxon>Eukaryota</taxon>
        <taxon>Metazoa</taxon>
        <taxon>Chordata</taxon>
        <taxon>Craniata</taxon>
        <taxon>Vertebrata</taxon>
        <taxon>Euteleostomi</taxon>
        <taxon>Mammalia</taxon>
        <taxon>Eutheria</taxon>
        <taxon>Euarchontoglires</taxon>
        <taxon>Glires</taxon>
        <taxon>Rodentia</taxon>
        <taxon>Myomorpha</taxon>
        <taxon>Muroidea</taxon>
        <taxon>Muridae</taxon>
        <taxon>Murinae</taxon>
        <taxon>Mus</taxon>
        <taxon>Mus</taxon>
    </lineage>
</organism>
<sequence>MKPLVAFLVVLSIFGIQSQAEEIFNIFVPSKNGGNIQETVTIDNQQNTATINIHSGSCSSTTIFDYKHGYIASRVLSRRACYVIKMDHKAIPALDKLQRFLYEKQTMNAIDSPEYTWVRYNPLKSLITKVDWFLFGSPIRQLCKHMPLYEGEVATKPKEVSTGACAKVGLLGILGVSICGGIHL</sequence>
<feature type="signal peptide" evidence="2">
    <location>
        <begin position="1"/>
        <end position="20"/>
    </location>
</feature>
<feature type="chain" id="PRO_0000252105" description="Gastrokine-2">
    <location>
        <begin position="21"/>
        <end position="184"/>
    </location>
</feature>
<feature type="domain" description="BRICHOS" evidence="3">
    <location>
        <begin position="54"/>
        <end position="151"/>
    </location>
</feature>
<feature type="disulfide bond" evidence="1">
    <location>
        <begin position="81"/>
        <end position="143"/>
    </location>
</feature>
<gene>
    <name type="primary">Gkn2</name>
    <name type="synonym">Blot</name>
</gene>
<accession>Q9CQS6</accession>
<protein>
    <recommendedName>
        <fullName>Gastrokine-2</fullName>
    </recommendedName>
    <alternativeName>
        <fullName>Blottin</fullName>
    </alternativeName>
</protein>
<comment type="subunit">
    <text evidence="1 4">Heterodimer with TFF1; disulfide linked (By similarity). Interacts with TFF2.</text>
</comment>
<comment type="subcellular location">
    <subcellularLocation>
        <location evidence="4">Secreted</location>
    </subcellularLocation>
    <subcellularLocation>
        <location evidence="4">Golgi apparatus</location>
    </subcellularLocation>
    <text>Secreted into the mucus layer, also present in Golgi apparatus and mucus granules.</text>
</comment>
<comment type="tissue specificity">
    <text evidence="4">Stomach foveolar epithelium and duodenal Brunner's glands.</text>
</comment>
<comment type="developmental stage">
    <text evidence="4">Expressed from 17.5 dpc onwards.</text>
</comment>
<name>GKN2_MOUSE</name>
<keyword id="KW-0903">Direct protein sequencing</keyword>
<keyword id="KW-1015">Disulfide bond</keyword>
<keyword id="KW-0333">Golgi apparatus</keyword>
<keyword id="KW-1185">Reference proteome</keyword>
<keyword id="KW-0964">Secreted</keyword>
<keyword id="KW-0732">Signal</keyword>
<evidence type="ECO:0000250" key="1"/>
<evidence type="ECO:0000255" key="2"/>
<evidence type="ECO:0000255" key="3">
    <source>
        <dbReference type="PROSITE-ProRule" id="PRU00255"/>
    </source>
</evidence>
<evidence type="ECO:0000269" key="4">
    <source>
    </source>
</evidence>
<evidence type="ECO:0000312" key="5">
    <source>
        <dbReference type="EMBL" id="AAH99445.1"/>
    </source>
</evidence>
<evidence type="ECO:0000312" key="6">
    <source>
        <dbReference type="EMBL" id="BAB25046.1"/>
    </source>
</evidence>
<evidence type="ECO:0000312" key="7">
    <source>
        <dbReference type="EMBL" id="BAB26008.1"/>
    </source>
</evidence>